<accession>C5DZX2</accession>
<organism>
    <name type="scientific">Zygosaccharomyces rouxii (strain ATCC 2623 / CBS 732 / NBRC 1130 / NCYC 568 / NRRL Y-229)</name>
    <dbReference type="NCBI Taxonomy" id="559307"/>
    <lineage>
        <taxon>Eukaryota</taxon>
        <taxon>Fungi</taxon>
        <taxon>Dikarya</taxon>
        <taxon>Ascomycota</taxon>
        <taxon>Saccharomycotina</taxon>
        <taxon>Saccharomycetes</taxon>
        <taxon>Saccharomycetales</taxon>
        <taxon>Saccharomycetaceae</taxon>
        <taxon>Zygosaccharomyces</taxon>
    </lineage>
</organism>
<name>OCA5_ZYGRC</name>
<gene>
    <name type="primary">OCA5</name>
    <name type="ordered locus">ZYRO0G07920g</name>
</gene>
<reference key="1">
    <citation type="journal article" date="2009" name="Genome Res.">
        <title>Comparative genomics of protoploid Saccharomycetaceae.</title>
        <authorList>
            <consortium name="The Genolevures Consortium"/>
            <person name="Souciet J.-L."/>
            <person name="Dujon B."/>
            <person name="Gaillardin C."/>
            <person name="Johnston M."/>
            <person name="Baret P.V."/>
            <person name="Cliften P."/>
            <person name="Sherman D.J."/>
            <person name="Weissenbach J."/>
            <person name="Westhof E."/>
            <person name="Wincker P."/>
            <person name="Jubin C."/>
            <person name="Poulain J."/>
            <person name="Barbe V."/>
            <person name="Segurens B."/>
            <person name="Artiguenave F."/>
            <person name="Anthouard V."/>
            <person name="Vacherie B."/>
            <person name="Val M.-E."/>
            <person name="Fulton R.S."/>
            <person name="Minx P."/>
            <person name="Wilson R."/>
            <person name="Durrens P."/>
            <person name="Jean G."/>
            <person name="Marck C."/>
            <person name="Martin T."/>
            <person name="Nikolski M."/>
            <person name="Rolland T."/>
            <person name="Seret M.-L."/>
            <person name="Casaregola S."/>
            <person name="Despons L."/>
            <person name="Fairhead C."/>
            <person name="Fischer G."/>
            <person name="Lafontaine I."/>
            <person name="Leh V."/>
            <person name="Lemaire M."/>
            <person name="de Montigny J."/>
            <person name="Neuveglise C."/>
            <person name="Thierry A."/>
            <person name="Blanc-Lenfle I."/>
            <person name="Bleykasten C."/>
            <person name="Diffels J."/>
            <person name="Fritsch E."/>
            <person name="Frangeul L."/>
            <person name="Goeffon A."/>
            <person name="Jauniaux N."/>
            <person name="Kachouri-Lafond R."/>
            <person name="Payen C."/>
            <person name="Potier S."/>
            <person name="Pribylova L."/>
            <person name="Ozanne C."/>
            <person name="Richard G.-F."/>
            <person name="Sacerdot C."/>
            <person name="Straub M.-L."/>
            <person name="Talla E."/>
        </authorList>
    </citation>
    <scope>NUCLEOTIDE SEQUENCE [LARGE SCALE GENOMIC DNA]</scope>
    <source>
        <strain>ATCC 2623 / CBS 732 / BCRC 21506 / NBRC 1130 / NCYC 568 / NRRL Y-229</strain>
    </source>
</reference>
<feature type="chain" id="PRO_0000408222" description="Oxidant-induced cell-cycle arrest protein 5">
    <location>
        <begin position="1"/>
        <end position="561"/>
    </location>
</feature>
<feature type="domain" description="Rab-GAP TBC" evidence="2">
    <location>
        <begin position="50"/>
        <end position="349"/>
    </location>
</feature>
<feature type="region of interest" description="Disordered" evidence="3">
    <location>
        <begin position="507"/>
        <end position="526"/>
    </location>
</feature>
<dbReference type="EMBL" id="CU928179">
    <property type="protein sequence ID" value="CAR29406.1"/>
    <property type="molecule type" value="Genomic_DNA"/>
</dbReference>
<dbReference type="RefSeq" id="XP_002498339.1">
    <property type="nucleotide sequence ID" value="XM_002498294.1"/>
</dbReference>
<dbReference type="FunCoup" id="C5DZX2">
    <property type="interactions" value="60"/>
</dbReference>
<dbReference type="STRING" id="559307.C5DZX2"/>
<dbReference type="GeneID" id="8206142"/>
<dbReference type="KEGG" id="zro:ZYRO0G07920g"/>
<dbReference type="HOGENOM" id="CLU_028817_0_0_1"/>
<dbReference type="InParanoid" id="C5DZX2"/>
<dbReference type="Proteomes" id="UP000008536">
    <property type="component" value="Chromosome G"/>
</dbReference>
<dbReference type="GO" id="GO:0005737">
    <property type="term" value="C:cytoplasm"/>
    <property type="evidence" value="ECO:0007669"/>
    <property type="project" value="UniProtKB-SubCell"/>
</dbReference>
<dbReference type="Gene3D" id="1.10.472.80">
    <property type="entry name" value="Ypt/Rab-GAP domain of gyp1p, domain 3"/>
    <property type="match status" value="1"/>
</dbReference>
<dbReference type="InterPro" id="IPR000195">
    <property type="entry name" value="Rab-GAP-TBC_dom"/>
</dbReference>
<dbReference type="InterPro" id="IPR035969">
    <property type="entry name" value="Rab-GAP_TBC_sf"/>
</dbReference>
<dbReference type="SMART" id="SM00164">
    <property type="entry name" value="TBC"/>
    <property type="match status" value="1"/>
</dbReference>
<dbReference type="SUPFAM" id="SSF47923">
    <property type="entry name" value="Ypt/Rab-GAP domain of gyp1p"/>
    <property type="match status" value="2"/>
</dbReference>
<dbReference type="PROSITE" id="PS50086">
    <property type="entry name" value="TBC_RABGAP"/>
    <property type="match status" value="1"/>
</dbReference>
<keyword id="KW-0963">Cytoplasm</keyword>
<keyword id="KW-1185">Reference proteome</keyword>
<proteinExistence type="inferred from homology"/>
<comment type="subcellular location">
    <subcellularLocation>
        <location evidence="1">Cytoplasm</location>
    </subcellularLocation>
</comment>
<comment type="similarity">
    <text evidence="4">Belongs to the OCA5 family.</text>
</comment>
<protein>
    <recommendedName>
        <fullName>Oxidant-induced cell-cycle arrest protein 5</fullName>
    </recommendedName>
</protein>
<sequence>MVENIPPVLSSHHYKHLKHLDRCKQLVETCVELLSKGDHDALAYLARTLGIPPQLRHKVWPLLLKYHPMCISPNILSNTVVWDSEHNFYKLVSGTSSSNDINKEPREGLENLILHDLKKYFRNVSKSEEDHELQVLKEAVLKFLSKWSRIFQYESGLAWIAVGLAEWIPIIENSEGPIVLNERKNHTSGTTTPNQPNPTCLSPLFKEYPLPSYLKSKLPKDSIFDFNEIYERIVLVILHCPDTITAQKLVEAESLKNSAPRRGSYAIKEGKLNYSPFLSGGDLGYQTQVFFKVFSTVLPELYQPFTEENAVQPSSKRTGWLYWWMKCSGARAFQKQDRGRLWDILLGWRPEPNRHTIDFFLNYNSKKFDHLYHSRFRNNLDFFNSTSKNDPFWFPDLDTIPLGTSKFKYDFNVFEELLDRNSYGHDAPPDPVPGNNDDDKIPFSLIDSHIQLVFIYIAILQHNEFKLLEFEETETSEFLNNVPMLSRADDICFKRLCDDDQSTYQNGFTSQEDLPKRPGSSKLRIGSDAKTSRSFNDILTMAGDIWRKWLWQELEECFVSE</sequence>
<evidence type="ECO:0000250" key="1"/>
<evidence type="ECO:0000255" key="2">
    <source>
        <dbReference type="PROSITE-ProRule" id="PRU00163"/>
    </source>
</evidence>
<evidence type="ECO:0000256" key="3">
    <source>
        <dbReference type="SAM" id="MobiDB-lite"/>
    </source>
</evidence>
<evidence type="ECO:0000305" key="4"/>